<dbReference type="EC" id="3.4.21.92" evidence="1"/>
<dbReference type="EMBL" id="CP000284">
    <property type="protein sequence ID" value="ABE49677.1"/>
    <property type="molecule type" value="Genomic_DNA"/>
</dbReference>
<dbReference type="RefSeq" id="WP_011479631.1">
    <property type="nucleotide sequence ID" value="NC_007947.1"/>
</dbReference>
<dbReference type="SMR" id="Q1H1G0"/>
<dbReference type="STRING" id="265072.Mfla_1409"/>
<dbReference type="MEROPS" id="S14.001"/>
<dbReference type="KEGG" id="mfa:Mfla_1409"/>
<dbReference type="eggNOG" id="COG0740">
    <property type="taxonomic scope" value="Bacteria"/>
</dbReference>
<dbReference type="HOGENOM" id="CLU_058707_3_2_4"/>
<dbReference type="OrthoDB" id="9802800at2"/>
<dbReference type="Proteomes" id="UP000002440">
    <property type="component" value="Chromosome"/>
</dbReference>
<dbReference type="GO" id="GO:0005737">
    <property type="term" value="C:cytoplasm"/>
    <property type="evidence" value="ECO:0007669"/>
    <property type="project" value="UniProtKB-SubCell"/>
</dbReference>
<dbReference type="GO" id="GO:0009368">
    <property type="term" value="C:endopeptidase Clp complex"/>
    <property type="evidence" value="ECO:0007669"/>
    <property type="project" value="TreeGrafter"/>
</dbReference>
<dbReference type="GO" id="GO:0004176">
    <property type="term" value="F:ATP-dependent peptidase activity"/>
    <property type="evidence" value="ECO:0007669"/>
    <property type="project" value="InterPro"/>
</dbReference>
<dbReference type="GO" id="GO:0051117">
    <property type="term" value="F:ATPase binding"/>
    <property type="evidence" value="ECO:0007669"/>
    <property type="project" value="TreeGrafter"/>
</dbReference>
<dbReference type="GO" id="GO:0004252">
    <property type="term" value="F:serine-type endopeptidase activity"/>
    <property type="evidence" value="ECO:0007669"/>
    <property type="project" value="UniProtKB-UniRule"/>
</dbReference>
<dbReference type="GO" id="GO:0006515">
    <property type="term" value="P:protein quality control for misfolded or incompletely synthesized proteins"/>
    <property type="evidence" value="ECO:0007669"/>
    <property type="project" value="TreeGrafter"/>
</dbReference>
<dbReference type="CDD" id="cd07017">
    <property type="entry name" value="S14_ClpP_2"/>
    <property type="match status" value="1"/>
</dbReference>
<dbReference type="FunFam" id="3.90.226.10:FF:000001">
    <property type="entry name" value="ATP-dependent Clp protease proteolytic subunit"/>
    <property type="match status" value="1"/>
</dbReference>
<dbReference type="Gene3D" id="3.90.226.10">
    <property type="entry name" value="2-enoyl-CoA Hydratase, Chain A, domain 1"/>
    <property type="match status" value="1"/>
</dbReference>
<dbReference type="HAMAP" id="MF_00444">
    <property type="entry name" value="ClpP"/>
    <property type="match status" value="1"/>
</dbReference>
<dbReference type="InterPro" id="IPR001907">
    <property type="entry name" value="ClpP"/>
</dbReference>
<dbReference type="InterPro" id="IPR029045">
    <property type="entry name" value="ClpP/crotonase-like_dom_sf"/>
</dbReference>
<dbReference type="InterPro" id="IPR023562">
    <property type="entry name" value="ClpP/TepA"/>
</dbReference>
<dbReference type="InterPro" id="IPR033135">
    <property type="entry name" value="ClpP_His_AS"/>
</dbReference>
<dbReference type="InterPro" id="IPR018215">
    <property type="entry name" value="ClpP_Ser_AS"/>
</dbReference>
<dbReference type="NCBIfam" id="TIGR00493">
    <property type="entry name" value="clpP"/>
    <property type="match status" value="1"/>
</dbReference>
<dbReference type="NCBIfam" id="NF001368">
    <property type="entry name" value="PRK00277.1"/>
    <property type="match status" value="1"/>
</dbReference>
<dbReference type="NCBIfam" id="NF009205">
    <property type="entry name" value="PRK12553.1"/>
    <property type="match status" value="1"/>
</dbReference>
<dbReference type="PANTHER" id="PTHR10381">
    <property type="entry name" value="ATP-DEPENDENT CLP PROTEASE PROTEOLYTIC SUBUNIT"/>
    <property type="match status" value="1"/>
</dbReference>
<dbReference type="PANTHER" id="PTHR10381:SF70">
    <property type="entry name" value="ATP-DEPENDENT CLP PROTEASE PROTEOLYTIC SUBUNIT"/>
    <property type="match status" value="1"/>
</dbReference>
<dbReference type="Pfam" id="PF00574">
    <property type="entry name" value="CLP_protease"/>
    <property type="match status" value="1"/>
</dbReference>
<dbReference type="PRINTS" id="PR00127">
    <property type="entry name" value="CLPPROTEASEP"/>
</dbReference>
<dbReference type="SUPFAM" id="SSF52096">
    <property type="entry name" value="ClpP/crotonase"/>
    <property type="match status" value="1"/>
</dbReference>
<dbReference type="PROSITE" id="PS00382">
    <property type="entry name" value="CLP_PROTEASE_HIS"/>
    <property type="match status" value="1"/>
</dbReference>
<dbReference type="PROSITE" id="PS00381">
    <property type="entry name" value="CLP_PROTEASE_SER"/>
    <property type="match status" value="1"/>
</dbReference>
<comment type="function">
    <text evidence="1">Cleaves peptides in various proteins in a process that requires ATP hydrolysis. Has a chymotrypsin-like activity. Plays a major role in the degradation of misfolded proteins.</text>
</comment>
<comment type="catalytic activity">
    <reaction evidence="1">
        <text>Hydrolysis of proteins to small peptides in the presence of ATP and magnesium. alpha-casein is the usual test substrate. In the absence of ATP, only oligopeptides shorter than five residues are hydrolyzed (such as succinyl-Leu-Tyr-|-NHMec, and Leu-Tyr-Leu-|-Tyr-Trp, in which cleavage of the -Tyr-|-Leu- and -Tyr-|-Trp bonds also occurs).</text>
        <dbReference type="EC" id="3.4.21.92"/>
    </reaction>
</comment>
<comment type="subunit">
    <text evidence="1">Fourteen ClpP subunits assemble into 2 heptameric rings which stack back to back to give a disk-like structure with a central cavity, resembling the structure of eukaryotic proteasomes.</text>
</comment>
<comment type="subcellular location">
    <subcellularLocation>
        <location evidence="1">Cytoplasm</location>
    </subcellularLocation>
</comment>
<comment type="similarity">
    <text evidence="1">Belongs to the peptidase S14 family.</text>
</comment>
<protein>
    <recommendedName>
        <fullName evidence="1">ATP-dependent Clp protease proteolytic subunit</fullName>
        <ecNumber evidence="1">3.4.21.92</ecNumber>
    </recommendedName>
    <alternativeName>
        <fullName evidence="1">Endopeptidase Clp</fullName>
    </alternativeName>
</protein>
<proteinExistence type="inferred from homology"/>
<accession>Q1H1G0</accession>
<feature type="chain" id="PRO_0000252827" description="ATP-dependent Clp protease proteolytic subunit">
    <location>
        <begin position="1"/>
        <end position="213"/>
    </location>
</feature>
<feature type="active site" description="Nucleophile" evidence="1">
    <location>
        <position position="114"/>
    </location>
</feature>
<feature type="active site" evidence="1">
    <location>
        <position position="139"/>
    </location>
</feature>
<name>CLPP_METFK</name>
<organism>
    <name type="scientific">Methylobacillus flagellatus (strain ATCC 51484 / DSM 6875 / VKM B-1610 / KT)</name>
    <dbReference type="NCBI Taxonomy" id="265072"/>
    <lineage>
        <taxon>Bacteria</taxon>
        <taxon>Pseudomonadati</taxon>
        <taxon>Pseudomonadota</taxon>
        <taxon>Betaproteobacteria</taxon>
        <taxon>Nitrosomonadales</taxon>
        <taxon>Methylophilaceae</taxon>
        <taxon>Methylobacillus</taxon>
    </lineage>
</organism>
<keyword id="KW-0963">Cytoplasm</keyword>
<keyword id="KW-0378">Hydrolase</keyword>
<keyword id="KW-0645">Protease</keyword>
<keyword id="KW-1185">Reference proteome</keyword>
<keyword id="KW-0720">Serine protease</keyword>
<reference key="1">
    <citation type="submission" date="2006-03" db="EMBL/GenBank/DDBJ databases">
        <title>Complete sequence of Methylobacillus flagellatus KT.</title>
        <authorList>
            <consortium name="US DOE Joint Genome Institute"/>
            <person name="Copeland A."/>
            <person name="Lucas S."/>
            <person name="Lapidus A."/>
            <person name="Barry K."/>
            <person name="Detter J.C."/>
            <person name="Glavina del Rio T."/>
            <person name="Hammon N."/>
            <person name="Israni S."/>
            <person name="Dalin E."/>
            <person name="Tice H."/>
            <person name="Pitluck S."/>
            <person name="Brettin T."/>
            <person name="Bruce D."/>
            <person name="Han C."/>
            <person name="Tapia R."/>
            <person name="Saunders E."/>
            <person name="Gilna P."/>
            <person name="Schmutz J."/>
            <person name="Larimer F."/>
            <person name="Land M."/>
            <person name="Kyrpides N."/>
            <person name="Anderson I."/>
            <person name="Richardson P."/>
        </authorList>
    </citation>
    <scope>NUCLEOTIDE SEQUENCE [LARGE SCALE GENOMIC DNA]</scope>
    <source>
        <strain>ATCC 51484 / DSM 6875 / VKM B-1610 / KT</strain>
    </source>
</reference>
<evidence type="ECO:0000255" key="1">
    <source>
        <dbReference type="HAMAP-Rule" id="MF_00444"/>
    </source>
</evidence>
<gene>
    <name evidence="1" type="primary">clpP</name>
    <name type="ordered locus">Mfla_1409</name>
</gene>
<sequence>MIHYPATAQSQFEAQGLGYIPMVIEQSGRGERSYDIYSRLLKERIIFLVGPVNDATANLVVAQLLFLEAENPDKDIYFYINSPGGSVTAGMGIYDTMQFVKPDVSTLCVGQAASMGALLLAAGAQGKRFCLPNSRVMIHQPLGGFQGQASDIEIHAKEILFLREKLNHILASHTGQPVEKIALDTDRDNFMSAEQSVAYGIVDKVIASRADAA</sequence>